<dbReference type="EC" id="3.1.-.-" evidence="1"/>
<dbReference type="EC" id="5.6.2.4" evidence="1"/>
<dbReference type="EMBL" id="CP000703">
    <property type="protein sequence ID" value="ABQ48768.1"/>
    <property type="molecule type" value="Genomic_DNA"/>
</dbReference>
<dbReference type="RefSeq" id="WP_000154921.1">
    <property type="nucleotide sequence ID" value="NC_009487.1"/>
</dbReference>
<dbReference type="SMR" id="A5IRE5"/>
<dbReference type="KEGG" id="saj:SaurJH9_0967"/>
<dbReference type="HOGENOM" id="CLU_001114_3_1_9"/>
<dbReference type="GO" id="GO:0005829">
    <property type="term" value="C:cytosol"/>
    <property type="evidence" value="ECO:0007669"/>
    <property type="project" value="TreeGrafter"/>
</dbReference>
<dbReference type="GO" id="GO:0033202">
    <property type="term" value="C:DNA helicase complex"/>
    <property type="evidence" value="ECO:0007669"/>
    <property type="project" value="TreeGrafter"/>
</dbReference>
<dbReference type="GO" id="GO:0043138">
    <property type="term" value="F:3'-5' DNA helicase activity"/>
    <property type="evidence" value="ECO:0007669"/>
    <property type="project" value="UniProtKB-UniRule"/>
</dbReference>
<dbReference type="GO" id="GO:0008408">
    <property type="term" value="F:3'-5' exonuclease activity"/>
    <property type="evidence" value="ECO:0007669"/>
    <property type="project" value="UniProtKB-UniRule"/>
</dbReference>
<dbReference type="GO" id="GO:0005524">
    <property type="term" value="F:ATP binding"/>
    <property type="evidence" value="ECO:0007669"/>
    <property type="project" value="UniProtKB-UniRule"/>
</dbReference>
<dbReference type="GO" id="GO:0016887">
    <property type="term" value="F:ATP hydrolysis activity"/>
    <property type="evidence" value="ECO:0007669"/>
    <property type="project" value="RHEA"/>
</dbReference>
<dbReference type="GO" id="GO:0003690">
    <property type="term" value="F:double-stranded DNA binding"/>
    <property type="evidence" value="ECO:0007669"/>
    <property type="project" value="UniProtKB-UniRule"/>
</dbReference>
<dbReference type="GO" id="GO:0000724">
    <property type="term" value="P:double-strand break repair via homologous recombination"/>
    <property type="evidence" value="ECO:0007669"/>
    <property type="project" value="UniProtKB-UniRule"/>
</dbReference>
<dbReference type="CDD" id="cd17932">
    <property type="entry name" value="DEXQc_UvrD"/>
    <property type="match status" value="2"/>
</dbReference>
<dbReference type="FunFam" id="3.40.50.300:FF:001196">
    <property type="entry name" value="ATP-dependent helicase/nuclease subunit A"/>
    <property type="match status" value="1"/>
</dbReference>
<dbReference type="FunFam" id="3.40.50.300:FF:001715">
    <property type="entry name" value="ATP-dependent helicase/nuclease subunit A"/>
    <property type="match status" value="1"/>
</dbReference>
<dbReference type="Gene3D" id="3.90.320.10">
    <property type="match status" value="1"/>
</dbReference>
<dbReference type="Gene3D" id="3.40.50.300">
    <property type="entry name" value="P-loop containing nucleotide triphosphate hydrolases"/>
    <property type="match status" value="4"/>
</dbReference>
<dbReference type="Gene3D" id="1.10.486.10">
    <property type="entry name" value="PCRA, domain 4"/>
    <property type="match status" value="1"/>
</dbReference>
<dbReference type="HAMAP" id="MF_01451">
    <property type="entry name" value="AddA"/>
    <property type="match status" value="1"/>
</dbReference>
<dbReference type="InterPro" id="IPR014152">
    <property type="entry name" value="AddA"/>
</dbReference>
<dbReference type="InterPro" id="IPR014017">
    <property type="entry name" value="DNA_helicase_UvrD-like_C"/>
</dbReference>
<dbReference type="InterPro" id="IPR000212">
    <property type="entry name" value="DNA_helicase_UvrD/REP"/>
</dbReference>
<dbReference type="InterPro" id="IPR027417">
    <property type="entry name" value="P-loop_NTPase"/>
</dbReference>
<dbReference type="InterPro" id="IPR011604">
    <property type="entry name" value="PDDEXK-like_dom_sf"/>
</dbReference>
<dbReference type="InterPro" id="IPR038726">
    <property type="entry name" value="PDDEXK_AddAB-type"/>
</dbReference>
<dbReference type="InterPro" id="IPR011335">
    <property type="entry name" value="Restrct_endonuc-II-like"/>
</dbReference>
<dbReference type="InterPro" id="IPR014016">
    <property type="entry name" value="UvrD-like_ATP-bd"/>
</dbReference>
<dbReference type="NCBIfam" id="TIGR02785">
    <property type="entry name" value="addA_Gpos"/>
    <property type="match status" value="1"/>
</dbReference>
<dbReference type="PANTHER" id="PTHR11070:SF48">
    <property type="entry name" value="ATP-DEPENDENT HELICASE_NUCLEASE SUBUNIT A"/>
    <property type="match status" value="1"/>
</dbReference>
<dbReference type="PANTHER" id="PTHR11070">
    <property type="entry name" value="UVRD / RECB / PCRA DNA HELICASE FAMILY MEMBER"/>
    <property type="match status" value="1"/>
</dbReference>
<dbReference type="Pfam" id="PF12705">
    <property type="entry name" value="PDDEXK_1"/>
    <property type="match status" value="1"/>
</dbReference>
<dbReference type="Pfam" id="PF00580">
    <property type="entry name" value="UvrD-helicase"/>
    <property type="match status" value="1"/>
</dbReference>
<dbReference type="Pfam" id="PF13361">
    <property type="entry name" value="UvrD_C"/>
    <property type="match status" value="1"/>
</dbReference>
<dbReference type="SUPFAM" id="SSF52540">
    <property type="entry name" value="P-loop containing nucleoside triphosphate hydrolases"/>
    <property type="match status" value="1"/>
</dbReference>
<dbReference type="SUPFAM" id="SSF52980">
    <property type="entry name" value="Restriction endonuclease-like"/>
    <property type="match status" value="1"/>
</dbReference>
<dbReference type="PROSITE" id="PS51198">
    <property type="entry name" value="UVRD_HELICASE_ATP_BIND"/>
    <property type="match status" value="1"/>
</dbReference>
<dbReference type="PROSITE" id="PS51217">
    <property type="entry name" value="UVRD_HELICASE_CTER"/>
    <property type="match status" value="1"/>
</dbReference>
<gene>
    <name evidence="1" type="primary">addA</name>
    <name type="ordered locus">SaurJH9_0967</name>
</gene>
<sequence>MTIPEKPQGVIWTDAQWQSIYATGQDVLVAAAAGSGKTAVLVERIIQKILRDGIDVDRLLVVTFTNLSAREMKHRVDQRIQEASIADPANAHLKNQRIKIHQAQISTLHSFCLKLIQQHYDVLNIDPNFRTSSEAENILLLEQTIDEVIEQHYDILDPAFIELTEQLSSDRSDDQFRMIIKQLYFFSVANPNPTNWLDQLVTPYEEEAQQAQLIQLLTDLSKVFITAAYDALNKAYDLFSMMDGVDKHLAVIEDERRLMGRVLEGGFIDIPYLTDHEFGARLPNVTAKIKEANEMMVDALEDAKLQYKKYKSLIDKVKNDYFSREADDLKADMQQLAPRVKYLARIVKDVMSEFNRKKRSKNILDFSDYEHFALQILTNEDGSPSEIAESYRQHFQEILVDEYQDTNRVQEKILSCIKTGDEHNGNLFMVGDVKQSIYKFRQADPSLFIEKYQRFTIDGDGTGRRIDLSQNFRSRKEVLSTTNYIFKHMMDEQVGEVKYDEAAQLYYGAPYDESDHPVNLKVLVEADQEHSDLTGSEQEAHFIVEQVKDILEHQKVYDMKTGSYRSATYKDIVILERSFGQARNLQQAFKNEDIPFHVNSREGYFEQTEVRLVLSFLRAIDNPLQDIYLVGLMRSVIYQFKEDELAQIRILSPNDDYFYQSIVNYINDEAADAILVDKLKMFLSDIQSYQQYSKDHPVYQLIDKFYNDHYVIQYFSGLIGGRGRRANLYGLFNKAIEFENSSFRGLYQFIRFIDELIERGKDFGEENVVGPNDNVVRMMTIHSSKGLEFPFVIYSGLSKDFNKRDLKQPVILNQQFGLGMDYFDVDKEMAFPSLASVAYKAVAEKELVSEEMRLVYVALTRAKEQLYLIGRVKNDKSLLELEQLSISGEHIAVNERLTSPNPFHLIYSILSKHQSASIPDDLKFEKDIAQVEDSSRPNVNISIIYFEDVSTETILDNNEYRSVNQLETMQNGNEDVKAQIKHQLDYQYPYVNDTKKPSKQSVSELKRQYETEESGTSYERVRQYRIGFSTYERPKFLSEQGKRKANEIGTLMHTVMQHLPFKKERISEVELHQYIDGLIDKHIIEADAKKDIRMDEIMTFINSELYSIIAEAEQVYRELPFVVNQALVDQLPQGDEDVSIIQGMIDLIFVKDGVHYFVDYKTDAFNRRRGMTDEEIGTQLKNKYKIQMKYYQNTLQTILNKEVKGYLYFFKFGTLQL</sequence>
<accession>A5IRE5</accession>
<protein>
    <recommendedName>
        <fullName evidence="1">ATP-dependent helicase/nuclease subunit A</fullName>
        <ecNumber evidence="1">3.1.-.-</ecNumber>
        <ecNumber evidence="1">5.6.2.4</ecNumber>
    </recommendedName>
    <alternativeName>
        <fullName evidence="1">ATP-dependent helicase/nuclease AddA</fullName>
    </alternativeName>
    <alternativeName>
        <fullName evidence="1">DNA 3'-5' helicase AddA</fullName>
    </alternativeName>
</protein>
<reference key="1">
    <citation type="submission" date="2007-05" db="EMBL/GenBank/DDBJ databases">
        <title>Complete sequence of chromosome of Staphylococcus aureus subsp. aureus JH9.</title>
        <authorList>
            <consortium name="US DOE Joint Genome Institute"/>
            <person name="Copeland A."/>
            <person name="Lucas S."/>
            <person name="Lapidus A."/>
            <person name="Barry K."/>
            <person name="Detter J.C."/>
            <person name="Glavina del Rio T."/>
            <person name="Hammon N."/>
            <person name="Israni S."/>
            <person name="Pitluck S."/>
            <person name="Chain P."/>
            <person name="Malfatti S."/>
            <person name="Shin M."/>
            <person name="Vergez L."/>
            <person name="Schmutz J."/>
            <person name="Larimer F."/>
            <person name="Land M."/>
            <person name="Hauser L."/>
            <person name="Kyrpides N."/>
            <person name="Kim E."/>
            <person name="Tomasz A."/>
            <person name="Richardson P."/>
        </authorList>
    </citation>
    <scope>NUCLEOTIDE SEQUENCE [LARGE SCALE GENOMIC DNA]</scope>
    <source>
        <strain>JH9</strain>
    </source>
</reference>
<comment type="function">
    <text evidence="1">The heterodimer acts as both an ATP-dependent DNA helicase and an ATP-dependent, dual-direction single-stranded exonuclease. Recognizes the chi site generating a DNA molecule suitable for the initiation of homologous recombination. The AddA nuclease domain is required for chi fragment generation; this subunit has the helicase and 3' -&gt; 5' nuclease activities.</text>
</comment>
<comment type="catalytic activity">
    <reaction evidence="1">
        <text>Couples ATP hydrolysis with the unwinding of duplex DNA by translocating in the 3'-5' direction.</text>
        <dbReference type="EC" id="5.6.2.4"/>
    </reaction>
</comment>
<comment type="catalytic activity">
    <reaction evidence="1">
        <text>ATP + H2O = ADP + phosphate + H(+)</text>
        <dbReference type="Rhea" id="RHEA:13065"/>
        <dbReference type="ChEBI" id="CHEBI:15377"/>
        <dbReference type="ChEBI" id="CHEBI:15378"/>
        <dbReference type="ChEBI" id="CHEBI:30616"/>
        <dbReference type="ChEBI" id="CHEBI:43474"/>
        <dbReference type="ChEBI" id="CHEBI:456216"/>
        <dbReference type="EC" id="5.6.2.4"/>
    </reaction>
</comment>
<comment type="cofactor">
    <cofactor evidence="1">
        <name>Mg(2+)</name>
        <dbReference type="ChEBI" id="CHEBI:18420"/>
    </cofactor>
</comment>
<comment type="subunit">
    <text evidence="1">Heterodimer of AddA and AddB/RexB.</text>
</comment>
<comment type="similarity">
    <text evidence="1">Belongs to the helicase family. AddA subfamily.</text>
</comment>
<keyword id="KW-0067">ATP-binding</keyword>
<keyword id="KW-0227">DNA damage</keyword>
<keyword id="KW-0234">DNA repair</keyword>
<keyword id="KW-0238">DNA-binding</keyword>
<keyword id="KW-0269">Exonuclease</keyword>
<keyword id="KW-0347">Helicase</keyword>
<keyword id="KW-0378">Hydrolase</keyword>
<keyword id="KW-0413">Isomerase</keyword>
<keyword id="KW-0540">Nuclease</keyword>
<keyword id="KW-0547">Nucleotide-binding</keyword>
<proteinExistence type="inferred from homology"/>
<organism>
    <name type="scientific">Staphylococcus aureus (strain JH9)</name>
    <dbReference type="NCBI Taxonomy" id="359786"/>
    <lineage>
        <taxon>Bacteria</taxon>
        <taxon>Bacillati</taxon>
        <taxon>Bacillota</taxon>
        <taxon>Bacilli</taxon>
        <taxon>Bacillales</taxon>
        <taxon>Staphylococcaceae</taxon>
        <taxon>Staphylococcus</taxon>
    </lineage>
</organism>
<feature type="chain" id="PRO_0000379310" description="ATP-dependent helicase/nuclease subunit A">
    <location>
        <begin position="1"/>
        <end position="1217"/>
    </location>
</feature>
<feature type="domain" description="UvrD-like helicase ATP-binding" evidence="1">
    <location>
        <begin position="10"/>
        <end position="475"/>
    </location>
</feature>
<feature type="domain" description="UvrD-like helicase C-terminal" evidence="1">
    <location>
        <begin position="476"/>
        <end position="786"/>
    </location>
</feature>
<feature type="binding site" evidence="1">
    <location>
        <begin position="31"/>
        <end position="38"/>
    </location>
    <ligand>
        <name>ATP</name>
        <dbReference type="ChEBI" id="CHEBI:30616"/>
    </ligand>
</feature>
<name>ADDA_STAA9</name>
<evidence type="ECO:0000255" key="1">
    <source>
        <dbReference type="HAMAP-Rule" id="MF_01451"/>
    </source>
</evidence>